<accession>O42493</accession>
<reference key="1">
    <citation type="journal article" date="1995" name="Adv. Exp. Med. Biol.">
        <title>Structure and organization of the isotocin and vasotocin genes from teleosts.</title>
        <authorList>
            <person name="Venkatesh B."/>
            <person name="Brenner S."/>
        </authorList>
    </citation>
    <scope>NUCLEOTIDE SEQUENCE [GENOMIC DNA]</scope>
</reference>
<reference key="2">
    <citation type="journal article" date="1997" name="Proc. Natl. Acad. Sci. U.S.A.">
        <title>Transgenic rats reveal functional conservation of regulatory controls between the Fugu isotocin and rat oxytocin genes.</title>
        <authorList>
            <person name="Venkatesh B."/>
            <person name="Si-Hoe S.L."/>
            <person name="Murphy D."/>
            <person name="Brenner S."/>
        </authorList>
    </citation>
    <scope>NUCLEOTIDE SEQUENCE [GENOMIC DNA]</scope>
</reference>
<proteinExistence type="inferred from homology"/>
<name>NEUI_TAKRU</name>
<keyword id="KW-0027">Amidation</keyword>
<keyword id="KW-0165">Cleavage on pair of basic residues</keyword>
<keyword id="KW-1015">Disulfide bond</keyword>
<keyword id="KW-0372">Hormone</keyword>
<keyword id="KW-1185">Reference proteome</keyword>
<keyword id="KW-0732">Signal</keyword>
<organism>
    <name type="scientific">Takifugu rubripes</name>
    <name type="common">Japanese pufferfish</name>
    <name type="synonym">Fugu rubripes</name>
    <dbReference type="NCBI Taxonomy" id="31033"/>
    <lineage>
        <taxon>Eukaryota</taxon>
        <taxon>Metazoa</taxon>
        <taxon>Chordata</taxon>
        <taxon>Craniata</taxon>
        <taxon>Vertebrata</taxon>
        <taxon>Euteleostomi</taxon>
        <taxon>Actinopterygii</taxon>
        <taxon>Neopterygii</taxon>
        <taxon>Teleostei</taxon>
        <taxon>Neoteleostei</taxon>
        <taxon>Acanthomorphata</taxon>
        <taxon>Eupercaria</taxon>
        <taxon>Tetraodontiformes</taxon>
        <taxon>Tetradontoidea</taxon>
        <taxon>Tetraodontidae</taxon>
        <taxon>Takifugu</taxon>
    </lineage>
</organism>
<dbReference type="EMBL" id="U90880">
    <property type="protein sequence ID" value="AAC60289.1"/>
    <property type="molecule type" value="Genomic_DNA"/>
</dbReference>
<dbReference type="SMR" id="O42493"/>
<dbReference type="STRING" id="31033.ENSTRUP00000039963"/>
<dbReference type="eggNOG" id="ENOG502S2CT">
    <property type="taxonomic scope" value="Eukaryota"/>
</dbReference>
<dbReference type="InParanoid" id="O42493"/>
<dbReference type="Proteomes" id="UP000005226">
    <property type="component" value="Unplaced"/>
</dbReference>
<dbReference type="GO" id="GO:0005615">
    <property type="term" value="C:extracellular space"/>
    <property type="evidence" value="ECO:0007669"/>
    <property type="project" value="TreeGrafter"/>
</dbReference>
<dbReference type="GO" id="GO:0030141">
    <property type="term" value="C:secretory granule"/>
    <property type="evidence" value="ECO:0007669"/>
    <property type="project" value="TreeGrafter"/>
</dbReference>
<dbReference type="GO" id="GO:0005185">
    <property type="term" value="F:neurohypophyseal hormone activity"/>
    <property type="evidence" value="ECO:0007669"/>
    <property type="project" value="InterPro"/>
</dbReference>
<dbReference type="FunFam" id="2.60.9.10:FF:000001">
    <property type="entry name" value="oxytocin-neurophysin 1"/>
    <property type="match status" value="1"/>
</dbReference>
<dbReference type="Gene3D" id="2.60.9.10">
    <property type="entry name" value="Neurohypophysial hormone domain"/>
    <property type="match status" value="1"/>
</dbReference>
<dbReference type="InterPro" id="IPR000981">
    <property type="entry name" value="Neurhyp_horm"/>
</dbReference>
<dbReference type="InterPro" id="IPR036387">
    <property type="entry name" value="Neurhyp_horm_dom_sf"/>
</dbReference>
<dbReference type="InterPro" id="IPR022423">
    <property type="entry name" value="Neurohypophysial_hormone_CS"/>
</dbReference>
<dbReference type="PANTHER" id="PTHR11681">
    <property type="entry name" value="NEUROPHYSIN"/>
    <property type="match status" value="1"/>
</dbReference>
<dbReference type="PANTHER" id="PTHR11681:SF13">
    <property type="entry name" value="VASOPRESSIN-NEUROPHYSIN 2-COPEPTIN PRECURSOR"/>
    <property type="match status" value="1"/>
</dbReference>
<dbReference type="Pfam" id="PF00184">
    <property type="entry name" value="Hormone_5"/>
    <property type="match status" value="1"/>
</dbReference>
<dbReference type="PIRSF" id="PIRSF001815">
    <property type="entry name" value="Nonapeptide_hormone_precursor"/>
    <property type="match status" value="1"/>
</dbReference>
<dbReference type="PRINTS" id="PR00831">
    <property type="entry name" value="NEUROPHYSIN"/>
</dbReference>
<dbReference type="SMART" id="SM00003">
    <property type="entry name" value="NH"/>
    <property type="match status" value="1"/>
</dbReference>
<dbReference type="SUPFAM" id="SSF49606">
    <property type="entry name" value="Neurophysin II"/>
    <property type="match status" value="1"/>
</dbReference>
<dbReference type="PROSITE" id="PS00264">
    <property type="entry name" value="NEUROHYPOPHYS_HORM"/>
    <property type="match status" value="1"/>
</dbReference>
<feature type="signal peptide" evidence="1">
    <location>
        <begin position="1"/>
        <end position="19"/>
    </location>
</feature>
<feature type="peptide" id="PRO_0000020554" description="Isotocin">
    <location>
        <begin position="20"/>
        <end position="28"/>
    </location>
</feature>
<feature type="chain" id="PRO_0000020555" description="Neurophysin IT 1">
    <location>
        <begin position="32"/>
        <end position="155"/>
    </location>
</feature>
<feature type="modified residue" description="Glycine amide" evidence="1">
    <location>
        <position position="28"/>
    </location>
</feature>
<feature type="disulfide bond" evidence="2">
    <location>
        <begin position="20"/>
        <end position="25"/>
    </location>
</feature>
<feature type="disulfide bond" evidence="2">
    <location>
        <begin position="41"/>
        <end position="85"/>
    </location>
</feature>
<feature type="disulfide bond" evidence="2">
    <location>
        <begin position="44"/>
        <end position="58"/>
    </location>
</feature>
<feature type="disulfide bond" evidence="2">
    <location>
        <begin position="52"/>
        <end position="75"/>
    </location>
</feature>
<feature type="disulfide bond" evidence="2">
    <location>
        <begin position="59"/>
        <end position="65"/>
    </location>
</feature>
<feature type="disulfide bond" evidence="2">
    <location>
        <begin position="92"/>
        <end position="105"/>
    </location>
</feature>
<feature type="disulfide bond" evidence="2">
    <location>
        <begin position="99"/>
        <end position="117"/>
    </location>
</feature>
<feature type="disulfide bond" evidence="2">
    <location>
        <begin position="106"/>
        <end position="111"/>
    </location>
</feature>
<sequence length="155" mass="16026">MTGTAISVCLLFLLSVCSACYISNCPIGGKRSIMDAPQRKCMSCGPGDRGRCFGPGICCGESFGCLMGSPESARCAEENYLLTPCQAGGRPCGSEGGLCASSGLCCDAESCTMDQSCLSEEEGDERGSLFDGSDSGDVILKLLRLAGLTSPHQTH</sequence>
<protein>
    <recommendedName>
        <fullName>Isotocin-neurophysin IT 1</fullName>
    </recommendedName>
    <component>
        <recommendedName>
            <fullName>Isotocin</fullName>
            <shortName>IT</shortName>
        </recommendedName>
    </component>
    <component>
        <recommendedName>
            <fullName>Neurophysin IT 1</fullName>
        </recommendedName>
    </component>
</protein>
<comment type="function">
    <text>Isotocin causes contraction of smooth muscles.</text>
</comment>
<comment type="PTM">
    <text evidence="1">Seven disulfide bonds are present in neurophysin.</text>
</comment>
<comment type="similarity">
    <text evidence="3">Belongs to the vasopressin/oxytocin family.</text>
</comment>
<evidence type="ECO:0000250" key="1"/>
<evidence type="ECO:0000250" key="2">
    <source>
        <dbReference type="UniProtKB" id="P01175"/>
    </source>
</evidence>
<evidence type="ECO:0000305" key="3"/>